<evidence type="ECO:0000255" key="1">
    <source>
        <dbReference type="HAMAP-Rule" id="MF_00176"/>
    </source>
</evidence>
<gene>
    <name evidence="1" type="primary">serS</name>
    <name type="ordered locus">Ecok1_07820</name>
    <name type="ORF">APECO1_1196</name>
</gene>
<organism>
    <name type="scientific">Escherichia coli O1:K1 / APEC</name>
    <dbReference type="NCBI Taxonomy" id="405955"/>
    <lineage>
        <taxon>Bacteria</taxon>
        <taxon>Pseudomonadati</taxon>
        <taxon>Pseudomonadota</taxon>
        <taxon>Gammaproteobacteria</taxon>
        <taxon>Enterobacterales</taxon>
        <taxon>Enterobacteriaceae</taxon>
        <taxon>Escherichia</taxon>
    </lineage>
</organism>
<keyword id="KW-0030">Aminoacyl-tRNA synthetase</keyword>
<keyword id="KW-0067">ATP-binding</keyword>
<keyword id="KW-0963">Cytoplasm</keyword>
<keyword id="KW-0436">Ligase</keyword>
<keyword id="KW-0547">Nucleotide-binding</keyword>
<keyword id="KW-0648">Protein biosynthesis</keyword>
<keyword id="KW-1185">Reference proteome</keyword>
<protein>
    <recommendedName>
        <fullName evidence="1">Serine--tRNA ligase</fullName>
        <ecNumber evidence="1">6.1.1.11</ecNumber>
    </recommendedName>
    <alternativeName>
        <fullName evidence="1">Seryl-tRNA synthetase</fullName>
        <shortName evidence="1">SerRS</shortName>
    </alternativeName>
    <alternativeName>
        <fullName evidence="1">Seryl-tRNA(Ser/Sec) synthetase</fullName>
    </alternativeName>
</protein>
<feature type="chain" id="PRO_1000019673" description="Serine--tRNA ligase">
    <location>
        <begin position="1"/>
        <end position="430"/>
    </location>
</feature>
<feature type="binding site" evidence="1">
    <location>
        <begin position="237"/>
        <end position="239"/>
    </location>
    <ligand>
        <name>L-serine</name>
        <dbReference type="ChEBI" id="CHEBI:33384"/>
    </ligand>
</feature>
<feature type="binding site" evidence="1">
    <location>
        <begin position="268"/>
        <end position="270"/>
    </location>
    <ligand>
        <name>ATP</name>
        <dbReference type="ChEBI" id="CHEBI:30616"/>
    </ligand>
</feature>
<feature type="binding site" evidence="1">
    <location>
        <position position="291"/>
    </location>
    <ligand>
        <name>L-serine</name>
        <dbReference type="ChEBI" id="CHEBI:33384"/>
    </ligand>
</feature>
<feature type="binding site" evidence="1">
    <location>
        <begin position="355"/>
        <end position="358"/>
    </location>
    <ligand>
        <name>ATP</name>
        <dbReference type="ChEBI" id="CHEBI:30616"/>
    </ligand>
</feature>
<feature type="binding site" evidence="1">
    <location>
        <position position="391"/>
    </location>
    <ligand>
        <name>L-serine</name>
        <dbReference type="ChEBI" id="CHEBI:33384"/>
    </ligand>
</feature>
<sequence length="430" mass="48414">MLDPNLLRNEPDAVAEKLARRGFKLDVDKLGALEERRKVLQVKTENLQAERNSRSKSIGQAKARGEDIEPLRLEVNKLGEELDAAKAELDALQAEIRDIALTIPNLPADEVPVGKDENDNVEVSRWGTPREFDFEVRDHVTLGEMHSGLDFAAAVKLTGSRFVVMKGQIARMHRALSQFMLDLHTEQHGYSENYVPYLVNQDTLYGTGQLPKFAGDLFHTRPLEEEADTSNYALIPTAEVPLTNLVRGEIIDEDDLPIKMTAHTPCFRSEAGSYGRDTRGLIRMHQFDKVEMVQIVRPEDSMAALEEMTGHAEKVLQLLGLPYRKIILCTGDMGFGACKTYDLEVWIPAQNTYREISSCSNVWDFQARRMQARCRSKSDKKTRLVHTLNGSGLAVGRTLVAVMENYQQADGRIEVPEVLRPYMNGLEYIG</sequence>
<accession>A1A9D6</accession>
<comment type="function">
    <text evidence="1">Catalyzes the attachment of serine to tRNA(Ser). Is also able to aminoacylate tRNA(Sec) with serine, to form the misacylated tRNA L-seryl-tRNA(Sec), which will be further converted into selenocysteinyl-tRNA(Sec).</text>
</comment>
<comment type="catalytic activity">
    <reaction evidence="1">
        <text>tRNA(Ser) + L-serine + ATP = L-seryl-tRNA(Ser) + AMP + diphosphate + H(+)</text>
        <dbReference type="Rhea" id="RHEA:12292"/>
        <dbReference type="Rhea" id="RHEA-COMP:9669"/>
        <dbReference type="Rhea" id="RHEA-COMP:9703"/>
        <dbReference type="ChEBI" id="CHEBI:15378"/>
        <dbReference type="ChEBI" id="CHEBI:30616"/>
        <dbReference type="ChEBI" id="CHEBI:33019"/>
        <dbReference type="ChEBI" id="CHEBI:33384"/>
        <dbReference type="ChEBI" id="CHEBI:78442"/>
        <dbReference type="ChEBI" id="CHEBI:78533"/>
        <dbReference type="ChEBI" id="CHEBI:456215"/>
        <dbReference type="EC" id="6.1.1.11"/>
    </reaction>
</comment>
<comment type="catalytic activity">
    <reaction evidence="1">
        <text>tRNA(Sec) + L-serine + ATP = L-seryl-tRNA(Sec) + AMP + diphosphate + H(+)</text>
        <dbReference type="Rhea" id="RHEA:42580"/>
        <dbReference type="Rhea" id="RHEA-COMP:9742"/>
        <dbReference type="Rhea" id="RHEA-COMP:10128"/>
        <dbReference type="ChEBI" id="CHEBI:15378"/>
        <dbReference type="ChEBI" id="CHEBI:30616"/>
        <dbReference type="ChEBI" id="CHEBI:33019"/>
        <dbReference type="ChEBI" id="CHEBI:33384"/>
        <dbReference type="ChEBI" id="CHEBI:78442"/>
        <dbReference type="ChEBI" id="CHEBI:78533"/>
        <dbReference type="ChEBI" id="CHEBI:456215"/>
        <dbReference type="EC" id="6.1.1.11"/>
    </reaction>
</comment>
<comment type="pathway">
    <text evidence="1">Aminoacyl-tRNA biosynthesis; selenocysteinyl-tRNA(Sec) biosynthesis; L-seryl-tRNA(Sec) from L-serine and tRNA(Sec): step 1/1.</text>
</comment>
<comment type="subunit">
    <text evidence="1">Homodimer. The tRNA molecule binds across the dimer.</text>
</comment>
<comment type="subcellular location">
    <subcellularLocation>
        <location evidence="1">Cytoplasm</location>
    </subcellularLocation>
</comment>
<comment type="domain">
    <text evidence="1">Consists of two distinct domains, a catalytic core and a N-terminal extension that is involved in tRNA binding.</text>
</comment>
<comment type="similarity">
    <text evidence="1">Belongs to the class-II aminoacyl-tRNA synthetase family. Type-1 seryl-tRNA synthetase subfamily.</text>
</comment>
<reference key="1">
    <citation type="journal article" date="2007" name="J. Bacteriol.">
        <title>The genome sequence of avian pathogenic Escherichia coli strain O1:K1:H7 shares strong similarities with human extraintestinal pathogenic E. coli genomes.</title>
        <authorList>
            <person name="Johnson T.J."/>
            <person name="Kariyawasam S."/>
            <person name="Wannemuehler Y."/>
            <person name="Mangiamele P."/>
            <person name="Johnson S.J."/>
            <person name="Doetkott C."/>
            <person name="Skyberg J.A."/>
            <person name="Lynne A.M."/>
            <person name="Johnson J.R."/>
            <person name="Nolan L.K."/>
        </authorList>
    </citation>
    <scope>NUCLEOTIDE SEQUENCE [LARGE SCALE GENOMIC DNA]</scope>
</reference>
<name>SYS_ECOK1</name>
<proteinExistence type="inferred from homology"/>
<dbReference type="EC" id="6.1.1.11" evidence="1"/>
<dbReference type="EMBL" id="CP000468">
    <property type="protein sequence ID" value="ABJ00276.1"/>
    <property type="molecule type" value="Genomic_DNA"/>
</dbReference>
<dbReference type="RefSeq" id="WP_000886683.1">
    <property type="nucleotide sequence ID" value="NZ_CADILS010000017.1"/>
</dbReference>
<dbReference type="SMR" id="A1A9D6"/>
<dbReference type="GeneID" id="93776527"/>
<dbReference type="KEGG" id="ecv:APECO1_1196"/>
<dbReference type="HOGENOM" id="CLU_023797_1_1_6"/>
<dbReference type="UniPathway" id="UPA00906">
    <property type="reaction ID" value="UER00895"/>
</dbReference>
<dbReference type="Proteomes" id="UP000008216">
    <property type="component" value="Chromosome"/>
</dbReference>
<dbReference type="GO" id="GO:0005737">
    <property type="term" value="C:cytoplasm"/>
    <property type="evidence" value="ECO:0007669"/>
    <property type="project" value="UniProtKB-SubCell"/>
</dbReference>
<dbReference type="GO" id="GO:0005524">
    <property type="term" value="F:ATP binding"/>
    <property type="evidence" value="ECO:0007669"/>
    <property type="project" value="UniProtKB-UniRule"/>
</dbReference>
<dbReference type="GO" id="GO:0004828">
    <property type="term" value="F:serine-tRNA ligase activity"/>
    <property type="evidence" value="ECO:0007669"/>
    <property type="project" value="UniProtKB-UniRule"/>
</dbReference>
<dbReference type="GO" id="GO:0016260">
    <property type="term" value="P:selenocysteine biosynthetic process"/>
    <property type="evidence" value="ECO:0007669"/>
    <property type="project" value="UniProtKB-UniRule"/>
</dbReference>
<dbReference type="GO" id="GO:0006434">
    <property type="term" value="P:seryl-tRNA aminoacylation"/>
    <property type="evidence" value="ECO:0007669"/>
    <property type="project" value="UniProtKB-UniRule"/>
</dbReference>
<dbReference type="CDD" id="cd00770">
    <property type="entry name" value="SerRS_core"/>
    <property type="match status" value="1"/>
</dbReference>
<dbReference type="FunFam" id="1.10.287.40:FF:000001">
    <property type="entry name" value="Serine--tRNA ligase"/>
    <property type="match status" value="1"/>
</dbReference>
<dbReference type="FunFam" id="3.30.930.10:FF:000018">
    <property type="entry name" value="Serine--tRNA ligase"/>
    <property type="match status" value="1"/>
</dbReference>
<dbReference type="Gene3D" id="3.30.930.10">
    <property type="entry name" value="Bira Bifunctional Protein, Domain 2"/>
    <property type="match status" value="1"/>
</dbReference>
<dbReference type="Gene3D" id="1.10.287.40">
    <property type="entry name" value="Serine-tRNA synthetase, tRNA binding domain"/>
    <property type="match status" value="1"/>
</dbReference>
<dbReference type="HAMAP" id="MF_00176">
    <property type="entry name" value="Ser_tRNA_synth_type1"/>
    <property type="match status" value="1"/>
</dbReference>
<dbReference type="InterPro" id="IPR002314">
    <property type="entry name" value="aa-tRNA-synt_IIb"/>
</dbReference>
<dbReference type="InterPro" id="IPR006195">
    <property type="entry name" value="aa-tRNA-synth_II"/>
</dbReference>
<dbReference type="InterPro" id="IPR045864">
    <property type="entry name" value="aa-tRNA-synth_II/BPL/LPL"/>
</dbReference>
<dbReference type="InterPro" id="IPR002317">
    <property type="entry name" value="Ser-tRNA-ligase_type_1"/>
</dbReference>
<dbReference type="InterPro" id="IPR015866">
    <property type="entry name" value="Ser-tRNA-synth_1_N"/>
</dbReference>
<dbReference type="InterPro" id="IPR042103">
    <property type="entry name" value="SerRS_1_N_sf"/>
</dbReference>
<dbReference type="InterPro" id="IPR033729">
    <property type="entry name" value="SerRS_core"/>
</dbReference>
<dbReference type="InterPro" id="IPR010978">
    <property type="entry name" value="tRNA-bd_arm"/>
</dbReference>
<dbReference type="NCBIfam" id="TIGR00414">
    <property type="entry name" value="serS"/>
    <property type="match status" value="1"/>
</dbReference>
<dbReference type="PANTHER" id="PTHR43697:SF1">
    <property type="entry name" value="SERINE--TRNA LIGASE"/>
    <property type="match status" value="1"/>
</dbReference>
<dbReference type="PANTHER" id="PTHR43697">
    <property type="entry name" value="SERYL-TRNA SYNTHETASE"/>
    <property type="match status" value="1"/>
</dbReference>
<dbReference type="Pfam" id="PF02403">
    <property type="entry name" value="Seryl_tRNA_N"/>
    <property type="match status" value="1"/>
</dbReference>
<dbReference type="Pfam" id="PF00587">
    <property type="entry name" value="tRNA-synt_2b"/>
    <property type="match status" value="1"/>
</dbReference>
<dbReference type="PIRSF" id="PIRSF001529">
    <property type="entry name" value="Ser-tRNA-synth_IIa"/>
    <property type="match status" value="1"/>
</dbReference>
<dbReference type="PRINTS" id="PR00981">
    <property type="entry name" value="TRNASYNTHSER"/>
</dbReference>
<dbReference type="SUPFAM" id="SSF55681">
    <property type="entry name" value="Class II aaRS and biotin synthetases"/>
    <property type="match status" value="1"/>
</dbReference>
<dbReference type="SUPFAM" id="SSF46589">
    <property type="entry name" value="tRNA-binding arm"/>
    <property type="match status" value="1"/>
</dbReference>
<dbReference type="PROSITE" id="PS50862">
    <property type="entry name" value="AA_TRNA_LIGASE_II"/>
    <property type="match status" value="1"/>
</dbReference>